<name>COBT_DEHMC</name>
<organism>
    <name type="scientific">Dehalococcoides mccartyi (strain CBDB1)</name>
    <dbReference type="NCBI Taxonomy" id="255470"/>
    <lineage>
        <taxon>Bacteria</taxon>
        <taxon>Bacillati</taxon>
        <taxon>Chloroflexota</taxon>
        <taxon>Dehalococcoidia</taxon>
        <taxon>Dehalococcoidales</taxon>
        <taxon>Dehalococcoidaceae</taxon>
        <taxon>Dehalococcoides</taxon>
    </lineage>
</organism>
<dbReference type="EC" id="2.4.2.21" evidence="1"/>
<dbReference type="EMBL" id="AJ965256">
    <property type="protein sequence ID" value="CAI82813.1"/>
    <property type="molecule type" value="Genomic_DNA"/>
</dbReference>
<dbReference type="RefSeq" id="WP_011309164.1">
    <property type="nucleotide sequence ID" value="NC_007356.1"/>
</dbReference>
<dbReference type="SMR" id="Q3ZX54"/>
<dbReference type="KEGG" id="deh:cbdbA641"/>
<dbReference type="HOGENOM" id="CLU_002982_0_0_0"/>
<dbReference type="UniPathway" id="UPA00061">
    <property type="reaction ID" value="UER00516"/>
</dbReference>
<dbReference type="Proteomes" id="UP000000433">
    <property type="component" value="Chromosome"/>
</dbReference>
<dbReference type="GO" id="GO:0008939">
    <property type="term" value="F:nicotinate-nucleotide-dimethylbenzimidazole phosphoribosyltransferase activity"/>
    <property type="evidence" value="ECO:0007669"/>
    <property type="project" value="UniProtKB-UniRule"/>
</dbReference>
<dbReference type="GO" id="GO:0009236">
    <property type="term" value="P:cobalamin biosynthetic process"/>
    <property type="evidence" value="ECO:0007669"/>
    <property type="project" value="UniProtKB-KW"/>
</dbReference>
<dbReference type="CDD" id="cd02439">
    <property type="entry name" value="DMB-PRT_CobT"/>
    <property type="match status" value="1"/>
</dbReference>
<dbReference type="FunFam" id="3.40.50.10210:FF:000001">
    <property type="entry name" value="Nicotinate-nucleotide--dimethylbenzimidazole phosphoribosyltransferase"/>
    <property type="match status" value="1"/>
</dbReference>
<dbReference type="Gene3D" id="1.10.1610.10">
    <property type="match status" value="1"/>
</dbReference>
<dbReference type="Gene3D" id="3.40.50.10210">
    <property type="match status" value="1"/>
</dbReference>
<dbReference type="HAMAP" id="MF_00230">
    <property type="entry name" value="CobT"/>
    <property type="match status" value="1"/>
</dbReference>
<dbReference type="InterPro" id="IPR003200">
    <property type="entry name" value="Nict_dMeBzImd_PRibTrfase"/>
</dbReference>
<dbReference type="InterPro" id="IPR017846">
    <property type="entry name" value="Nict_dMeBzImd_PRibTrfase_bact"/>
</dbReference>
<dbReference type="InterPro" id="IPR023195">
    <property type="entry name" value="Nict_dMeBzImd_PRibTrfase_N"/>
</dbReference>
<dbReference type="InterPro" id="IPR036087">
    <property type="entry name" value="Nict_dMeBzImd_PRibTrfase_sf"/>
</dbReference>
<dbReference type="NCBIfam" id="TIGR03160">
    <property type="entry name" value="cobT_DBIPRT"/>
    <property type="match status" value="1"/>
</dbReference>
<dbReference type="NCBIfam" id="NF000996">
    <property type="entry name" value="PRK00105.1"/>
    <property type="match status" value="1"/>
</dbReference>
<dbReference type="PANTHER" id="PTHR43463">
    <property type="entry name" value="NICOTINATE-NUCLEOTIDE--DIMETHYLBENZIMIDAZOLE PHOSPHORIBOSYLTRANSFERASE"/>
    <property type="match status" value="1"/>
</dbReference>
<dbReference type="PANTHER" id="PTHR43463:SF1">
    <property type="entry name" value="NICOTINATE-NUCLEOTIDE--DIMETHYLBENZIMIDAZOLE PHOSPHORIBOSYLTRANSFERASE"/>
    <property type="match status" value="1"/>
</dbReference>
<dbReference type="Pfam" id="PF02277">
    <property type="entry name" value="DBI_PRT"/>
    <property type="match status" value="1"/>
</dbReference>
<dbReference type="SUPFAM" id="SSF52733">
    <property type="entry name" value="Nicotinate mononucleotide:5,6-dimethylbenzimidazole phosphoribosyltransferase (CobT)"/>
    <property type="match status" value="1"/>
</dbReference>
<gene>
    <name evidence="1" type="primary">cobT</name>
    <name type="ordered locus">cbdbA641</name>
</gene>
<feature type="chain" id="PRO_1000021589" description="Nicotinate-nucleotide--dimethylbenzimidazole phosphoribosyltransferase">
    <location>
        <begin position="1"/>
        <end position="352"/>
    </location>
</feature>
<feature type="active site" description="Proton acceptor" evidence="1">
    <location>
        <position position="318"/>
    </location>
</feature>
<reference key="1">
    <citation type="journal article" date="2005" name="Nat. Biotechnol.">
        <title>Genome sequence of the chlorinated compound-respiring bacterium Dehalococcoides species strain CBDB1.</title>
        <authorList>
            <person name="Kube M."/>
            <person name="Beck A."/>
            <person name="Zinder S.H."/>
            <person name="Kuhl H."/>
            <person name="Reinhardt R."/>
            <person name="Adrian L."/>
        </authorList>
    </citation>
    <scope>NUCLEOTIDE SEQUENCE [LARGE SCALE GENOMIC DNA]</scope>
    <source>
        <strain>CBDB1</strain>
    </source>
</reference>
<comment type="function">
    <text evidence="1">Catalyzes the synthesis of alpha-ribazole-5'-phosphate from nicotinate mononucleotide (NAMN) and 5,6-dimethylbenzimidazole (DMB).</text>
</comment>
<comment type="catalytic activity">
    <reaction evidence="1">
        <text>5,6-dimethylbenzimidazole + nicotinate beta-D-ribonucleotide = alpha-ribazole 5'-phosphate + nicotinate + H(+)</text>
        <dbReference type="Rhea" id="RHEA:11196"/>
        <dbReference type="ChEBI" id="CHEBI:15378"/>
        <dbReference type="ChEBI" id="CHEBI:15890"/>
        <dbReference type="ChEBI" id="CHEBI:32544"/>
        <dbReference type="ChEBI" id="CHEBI:57502"/>
        <dbReference type="ChEBI" id="CHEBI:57918"/>
        <dbReference type="EC" id="2.4.2.21"/>
    </reaction>
</comment>
<comment type="pathway">
    <text evidence="1">Nucleoside biosynthesis; alpha-ribazole biosynthesis; alpha-ribazole from 5,6-dimethylbenzimidazole: step 1/2.</text>
</comment>
<comment type="similarity">
    <text evidence="1">Belongs to the CobT family.</text>
</comment>
<proteinExistence type="inferred from homology"/>
<accession>Q3ZX54</accession>
<keyword id="KW-0169">Cobalamin biosynthesis</keyword>
<keyword id="KW-0328">Glycosyltransferase</keyword>
<keyword id="KW-0808">Transferase</keyword>
<sequence length="352" mass="36729">MELLNATLAKIYGLDKEAMVKAQAHQDILIKPQGSLGKLEAIVVQLAGIQGDAKPKTAKKAIITMAGDHGIIDEKFHNWPKEVTVQMLQNFAHGGAAINVLSRQVGARNVVVALGVATPMAADPNIINRNIAPGTNNMVHGPAMTREQAVKAIEVGIEIVNAEVKKGLDLVGTGDMGIGNTSPSAAICSIITGRSLEDVTGRGTGASDEQMKLKRNAIAKAISLNNPDAKDAIDVLSKVGGYEIGGLAGVILGAAANRVAVVVDGFISGAAALIAYTICPQVKDFMFAAHQSVEPGHRILLEHMGLDAILKMDMRLGEGTGAALAMNIIEAANRIQHEMASFADAGVSEKQS</sequence>
<evidence type="ECO:0000255" key="1">
    <source>
        <dbReference type="HAMAP-Rule" id="MF_00230"/>
    </source>
</evidence>
<protein>
    <recommendedName>
        <fullName evidence="1">Nicotinate-nucleotide--dimethylbenzimidazole phosphoribosyltransferase</fullName>
        <shortName evidence="1">NN:DBI PRT</shortName>
        <ecNumber evidence="1">2.4.2.21</ecNumber>
    </recommendedName>
    <alternativeName>
        <fullName evidence="1">N(1)-alpha-phosphoribosyltransferase</fullName>
    </alternativeName>
</protein>